<dbReference type="EMBL" id="AE006470">
    <property type="protein sequence ID" value="AAM73393.1"/>
    <property type="molecule type" value="Genomic_DNA"/>
</dbReference>
<dbReference type="RefSeq" id="NP_663051.1">
    <property type="nucleotide sequence ID" value="NC_002932.3"/>
</dbReference>
<dbReference type="SMR" id="Q8KAI4"/>
<dbReference type="STRING" id="194439.CT2177"/>
<dbReference type="EnsemblBacteria" id="AAM73393">
    <property type="protein sequence ID" value="AAM73393"/>
    <property type="gene ID" value="CT2177"/>
</dbReference>
<dbReference type="KEGG" id="cte:CT2177"/>
<dbReference type="PATRIC" id="fig|194439.7.peg.1976"/>
<dbReference type="eggNOG" id="COG0094">
    <property type="taxonomic scope" value="Bacteria"/>
</dbReference>
<dbReference type="HOGENOM" id="CLU_061015_2_1_10"/>
<dbReference type="OrthoDB" id="9806626at2"/>
<dbReference type="Proteomes" id="UP000001007">
    <property type="component" value="Chromosome"/>
</dbReference>
<dbReference type="GO" id="GO:1990904">
    <property type="term" value="C:ribonucleoprotein complex"/>
    <property type="evidence" value="ECO:0007669"/>
    <property type="project" value="UniProtKB-KW"/>
</dbReference>
<dbReference type="GO" id="GO:0005840">
    <property type="term" value="C:ribosome"/>
    <property type="evidence" value="ECO:0007669"/>
    <property type="project" value="UniProtKB-KW"/>
</dbReference>
<dbReference type="GO" id="GO:0019843">
    <property type="term" value="F:rRNA binding"/>
    <property type="evidence" value="ECO:0007669"/>
    <property type="project" value="UniProtKB-UniRule"/>
</dbReference>
<dbReference type="GO" id="GO:0003735">
    <property type="term" value="F:structural constituent of ribosome"/>
    <property type="evidence" value="ECO:0007669"/>
    <property type="project" value="InterPro"/>
</dbReference>
<dbReference type="GO" id="GO:0000049">
    <property type="term" value="F:tRNA binding"/>
    <property type="evidence" value="ECO:0007669"/>
    <property type="project" value="UniProtKB-UniRule"/>
</dbReference>
<dbReference type="GO" id="GO:0006412">
    <property type="term" value="P:translation"/>
    <property type="evidence" value="ECO:0007669"/>
    <property type="project" value="UniProtKB-UniRule"/>
</dbReference>
<dbReference type="FunFam" id="3.30.1440.10:FF:000001">
    <property type="entry name" value="50S ribosomal protein L5"/>
    <property type="match status" value="1"/>
</dbReference>
<dbReference type="Gene3D" id="3.30.1440.10">
    <property type="match status" value="1"/>
</dbReference>
<dbReference type="HAMAP" id="MF_01333_B">
    <property type="entry name" value="Ribosomal_uL5_B"/>
    <property type="match status" value="1"/>
</dbReference>
<dbReference type="InterPro" id="IPR002132">
    <property type="entry name" value="Ribosomal_uL5"/>
</dbReference>
<dbReference type="InterPro" id="IPR020930">
    <property type="entry name" value="Ribosomal_uL5_bac-type"/>
</dbReference>
<dbReference type="InterPro" id="IPR031309">
    <property type="entry name" value="Ribosomal_uL5_C"/>
</dbReference>
<dbReference type="InterPro" id="IPR022803">
    <property type="entry name" value="Ribosomal_uL5_dom_sf"/>
</dbReference>
<dbReference type="InterPro" id="IPR031310">
    <property type="entry name" value="Ribosomal_uL5_N"/>
</dbReference>
<dbReference type="NCBIfam" id="NF000585">
    <property type="entry name" value="PRK00010.1"/>
    <property type="match status" value="1"/>
</dbReference>
<dbReference type="PANTHER" id="PTHR11994">
    <property type="entry name" value="60S RIBOSOMAL PROTEIN L11-RELATED"/>
    <property type="match status" value="1"/>
</dbReference>
<dbReference type="Pfam" id="PF00281">
    <property type="entry name" value="Ribosomal_L5"/>
    <property type="match status" value="1"/>
</dbReference>
<dbReference type="Pfam" id="PF00673">
    <property type="entry name" value="Ribosomal_L5_C"/>
    <property type="match status" value="1"/>
</dbReference>
<dbReference type="PIRSF" id="PIRSF002161">
    <property type="entry name" value="Ribosomal_L5"/>
    <property type="match status" value="1"/>
</dbReference>
<dbReference type="SUPFAM" id="SSF55282">
    <property type="entry name" value="RL5-like"/>
    <property type="match status" value="1"/>
</dbReference>
<keyword id="KW-1185">Reference proteome</keyword>
<keyword id="KW-0687">Ribonucleoprotein</keyword>
<keyword id="KW-0689">Ribosomal protein</keyword>
<keyword id="KW-0694">RNA-binding</keyword>
<keyword id="KW-0699">rRNA-binding</keyword>
<keyword id="KW-0820">tRNA-binding</keyword>
<organism>
    <name type="scientific">Chlorobaculum tepidum (strain ATCC 49652 / DSM 12025 / NBRC 103806 / TLS)</name>
    <name type="common">Chlorobium tepidum</name>
    <dbReference type="NCBI Taxonomy" id="194439"/>
    <lineage>
        <taxon>Bacteria</taxon>
        <taxon>Pseudomonadati</taxon>
        <taxon>Chlorobiota</taxon>
        <taxon>Chlorobiia</taxon>
        <taxon>Chlorobiales</taxon>
        <taxon>Chlorobiaceae</taxon>
        <taxon>Chlorobaculum</taxon>
    </lineage>
</organism>
<comment type="function">
    <text evidence="1">This is one of the proteins that bind and probably mediate the attachment of the 5S RNA into the large ribosomal subunit, where it forms part of the central protuberance. In the 70S ribosome it contacts protein S13 of the 30S subunit (bridge B1b), connecting the 2 subunits; this bridge is implicated in subunit movement. Contacts the P site tRNA; the 5S rRNA and some of its associated proteins might help stabilize positioning of ribosome-bound tRNAs.</text>
</comment>
<comment type="subunit">
    <text evidence="1">Part of the 50S ribosomal subunit; part of the 5S rRNA/L5/L18/L25 subcomplex. Contacts the 5S rRNA and the P site tRNA. Forms a bridge to the 30S subunit in the 70S ribosome.</text>
</comment>
<comment type="similarity">
    <text evidence="1">Belongs to the universal ribosomal protein uL5 family.</text>
</comment>
<sequence>MPARLEVYYRETVVPKLMERFKYKSIMMVPRLEKISVNIGVGEAAQEPKLLETAMQELGQITGQKPQVRKAKKAISNFKLREGQAIGCRVTLRRKIMFEFMDRFISVAVPRIRDFRGLSDTSFDGRGNYNVGIREQIIFPEIDIDKVPRINGMDISFVTSAKTDEEAYELLSLLGMPFKKKNQ</sequence>
<accession>Q8KAI4</accession>
<reference key="1">
    <citation type="journal article" date="2002" name="Proc. Natl. Acad. Sci. U.S.A.">
        <title>The complete genome sequence of Chlorobium tepidum TLS, a photosynthetic, anaerobic, green-sulfur bacterium.</title>
        <authorList>
            <person name="Eisen J.A."/>
            <person name="Nelson K.E."/>
            <person name="Paulsen I.T."/>
            <person name="Heidelberg J.F."/>
            <person name="Wu M."/>
            <person name="Dodson R.J."/>
            <person name="DeBoy R.T."/>
            <person name="Gwinn M.L."/>
            <person name="Nelson W.C."/>
            <person name="Haft D.H."/>
            <person name="Hickey E.K."/>
            <person name="Peterson J.D."/>
            <person name="Durkin A.S."/>
            <person name="Kolonay J.F."/>
            <person name="Yang F."/>
            <person name="Holt I.E."/>
            <person name="Umayam L.A."/>
            <person name="Mason T.M."/>
            <person name="Brenner M."/>
            <person name="Shea T.P."/>
            <person name="Parksey D.S."/>
            <person name="Nierman W.C."/>
            <person name="Feldblyum T.V."/>
            <person name="Hansen C.L."/>
            <person name="Craven M.B."/>
            <person name="Radune D."/>
            <person name="Vamathevan J.J."/>
            <person name="Khouri H.M."/>
            <person name="White O."/>
            <person name="Gruber T.M."/>
            <person name="Ketchum K.A."/>
            <person name="Venter J.C."/>
            <person name="Tettelin H."/>
            <person name="Bryant D.A."/>
            <person name="Fraser C.M."/>
        </authorList>
    </citation>
    <scope>NUCLEOTIDE SEQUENCE [LARGE SCALE GENOMIC DNA]</scope>
    <source>
        <strain>ATCC 49652 / DSM 12025 / NBRC 103806 / TLS</strain>
    </source>
</reference>
<evidence type="ECO:0000255" key="1">
    <source>
        <dbReference type="HAMAP-Rule" id="MF_01333"/>
    </source>
</evidence>
<evidence type="ECO:0000305" key="2"/>
<proteinExistence type="inferred from homology"/>
<gene>
    <name evidence="1" type="primary">rplE</name>
    <name type="ordered locus">CT2177</name>
</gene>
<name>RL5_CHLTE</name>
<protein>
    <recommendedName>
        <fullName evidence="1">Large ribosomal subunit protein uL5</fullName>
    </recommendedName>
    <alternativeName>
        <fullName evidence="2">50S ribosomal protein L5</fullName>
    </alternativeName>
</protein>
<feature type="chain" id="PRO_0000124913" description="Large ribosomal subunit protein uL5">
    <location>
        <begin position="1"/>
        <end position="183"/>
    </location>
</feature>